<evidence type="ECO:0000255" key="1">
    <source>
        <dbReference type="HAMAP-Rule" id="MF_00530"/>
    </source>
</evidence>
<comment type="function">
    <text evidence="1">Produces ATP from ADP in the presence of a proton gradient across the membrane.</text>
</comment>
<comment type="subunit">
    <text evidence="1">F-type ATPases have 2 components, CF(1) - the catalytic core - and CF(0) - the membrane proton channel. CF(1) has five subunits: alpha(3), beta(3), gamma(1), delta(1), epsilon(1). CF(0) has three main subunits: a, b and c.</text>
</comment>
<comment type="subcellular location">
    <subcellularLocation>
        <location evidence="1">Cell inner membrane</location>
        <topology evidence="1">Peripheral membrane protein</topology>
    </subcellularLocation>
</comment>
<comment type="similarity">
    <text evidence="1">Belongs to the ATPase epsilon chain family.</text>
</comment>
<organism>
    <name type="scientific">Afipia carboxidovorans (strain ATCC 49405 / DSM 1227 / KCTC 32145 / OM5)</name>
    <name type="common">Oligotropha carboxidovorans</name>
    <dbReference type="NCBI Taxonomy" id="504832"/>
    <lineage>
        <taxon>Bacteria</taxon>
        <taxon>Pseudomonadati</taxon>
        <taxon>Pseudomonadota</taxon>
        <taxon>Alphaproteobacteria</taxon>
        <taxon>Hyphomicrobiales</taxon>
        <taxon>Nitrobacteraceae</taxon>
        <taxon>Afipia</taxon>
    </lineage>
</organism>
<name>ATPE_AFIC5</name>
<sequence length="136" mass="14528">MATFHFDLVSPEKIAFSGEVEQVDVPGVEGDFGVLAGHSPLVASVRPGILTVTIGGKHEKIIVLGGLAEVSEKGLTVLADTATSLADLDRAAFARQIEEMESNLKNEEPGNELDKAIARLDHFKVIQQHITSTGMH</sequence>
<reference key="1">
    <citation type="journal article" date="2008" name="J. Bacteriol.">
        <title>Genome sequence of the chemolithoautotrophic bacterium Oligotropha carboxidovorans OM5T.</title>
        <authorList>
            <person name="Paul D."/>
            <person name="Bridges S."/>
            <person name="Burgess S.C."/>
            <person name="Dandass Y."/>
            <person name="Lawrence M.L."/>
        </authorList>
    </citation>
    <scope>NUCLEOTIDE SEQUENCE [LARGE SCALE GENOMIC DNA]</scope>
    <source>
        <strain>ATCC 49405 / DSM 1227 / KCTC 32145 / OM5</strain>
    </source>
</reference>
<reference key="2">
    <citation type="journal article" date="2011" name="J. Bacteriol.">
        <title>Complete genome sequences of the chemolithoautotrophic Oligotropha carboxidovorans strains OM4 and OM5.</title>
        <authorList>
            <person name="Volland S."/>
            <person name="Rachinger M."/>
            <person name="Strittmatter A."/>
            <person name="Daniel R."/>
            <person name="Gottschalk G."/>
            <person name="Meyer O."/>
        </authorList>
    </citation>
    <scope>NUCLEOTIDE SEQUENCE [LARGE SCALE GENOMIC DNA]</scope>
    <source>
        <strain>ATCC 49405 / DSM 1227 / KCTC 32145 / OM5</strain>
    </source>
</reference>
<feature type="chain" id="PRO_1000127873" description="ATP synthase epsilon chain">
    <location>
        <begin position="1"/>
        <end position="136"/>
    </location>
</feature>
<proteinExistence type="inferred from homology"/>
<protein>
    <recommendedName>
        <fullName evidence="1">ATP synthase epsilon chain</fullName>
    </recommendedName>
    <alternativeName>
        <fullName evidence="1">ATP synthase F1 sector epsilon subunit</fullName>
    </alternativeName>
    <alternativeName>
        <fullName evidence="1">F-ATPase epsilon subunit</fullName>
    </alternativeName>
</protein>
<gene>
    <name evidence="1" type="primary">atpC</name>
    <name type="ordered locus">OCAR_4596</name>
    <name type="ordered locus">OCA5_c33480</name>
</gene>
<keyword id="KW-0066">ATP synthesis</keyword>
<keyword id="KW-0997">Cell inner membrane</keyword>
<keyword id="KW-1003">Cell membrane</keyword>
<keyword id="KW-0139">CF(1)</keyword>
<keyword id="KW-0375">Hydrogen ion transport</keyword>
<keyword id="KW-0406">Ion transport</keyword>
<keyword id="KW-0472">Membrane</keyword>
<keyword id="KW-1185">Reference proteome</keyword>
<keyword id="KW-0813">Transport</keyword>
<accession>B6JD10</accession>
<accession>F8BTY0</accession>
<dbReference type="EMBL" id="CP001196">
    <property type="protein sequence ID" value="ACI91740.1"/>
    <property type="molecule type" value="Genomic_DNA"/>
</dbReference>
<dbReference type="EMBL" id="CP002826">
    <property type="protein sequence ID" value="AEI08022.1"/>
    <property type="molecule type" value="Genomic_DNA"/>
</dbReference>
<dbReference type="RefSeq" id="WP_012561771.1">
    <property type="nucleotide sequence ID" value="NC_015684.1"/>
</dbReference>
<dbReference type="SMR" id="B6JD10"/>
<dbReference type="STRING" id="504832.OCA5_c33480"/>
<dbReference type="KEGG" id="oca:OCAR_4596"/>
<dbReference type="KEGG" id="ocg:OCA5_c33480"/>
<dbReference type="PATRIC" id="fig|504832.7.peg.3519"/>
<dbReference type="eggNOG" id="COG0355">
    <property type="taxonomic scope" value="Bacteria"/>
</dbReference>
<dbReference type="HOGENOM" id="CLU_084338_2_1_5"/>
<dbReference type="OrthoDB" id="9799969at2"/>
<dbReference type="Proteomes" id="UP000007730">
    <property type="component" value="Chromosome"/>
</dbReference>
<dbReference type="GO" id="GO:0005886">
    <property type="term" value="C:plasma membrane"/>
    <property type="evidence" value="ECO:0007669"/>
    <property type="project" value="UniProtKB-SubCell"/>
</dbReference>
<dbReference type="GO" id="GO:0045259">
    <property type="term" value="C:proton-transporting ATP synthase complex"/>
    <property type="evidence" value="ECO:0007669"/>
    <property type="project" value="UniProtKB-KW"/>
</dbReference>
<dbReference type="GO" id="GO:0005524">
    <property type="term" value="F:ATP binding"/>
    <property type="evidence" value="ECO:0007669"/>
    <property type="project" value="UniProtKB-UniRule"/>
</dbReference>
<dbReference type="GO" id="GO:0046933">
    <property type="term" value="F:proton-transporting ATP synthase activity, rotational mechanism"/>
    <property type="evidence" value="ECO:0007669"/>
    <property type="project" value="UniProtKB-UniRule"/>
</dbReference>
<dbReference type="CDD" id="cd12152">
    <property type="entry name" value="F1-ATPase_delta"/>
    <property type="match status" value="1"/>
</dbReference>
<dbReference type="Gene3D" id="2.60.15.10">
    <property type="entry name" value="F0F1 ATP synthase delta/epsilon subunit, N-terminal"/>
    <property type="match status" value="1"/>
</dbReference>
<dbReference type="HAMAP" id="MF_00530">
    <property type="entry name" value="ATP_synth_epsil_bac"/>
    <property type="match status" value="1"/>
</dbReference>
<dbReference type="InterPro" id="IPR001469">
    <property type="entry name" value="ATP_synth_F1_dsu/esu"/>
</dbReference>
<dbReference type="InterPro" id="IPR020546">
    <property type="entry name" value="ATP_synth_F1_dsu/esu_N"/>
</dbReference>
<dbReference type="InterPro" id="IPR036771">
    <property type="entry name" value="ATPsynth_dsu/esu_N"/>
</dbReference>
<dbReference type="NCBIfam" id="TIGR01216">
    <property type="entry name" value="ATP_synt_epsi"/>
    <property type="match status" value="1"/>
</dbReference>
<dbReference type="NCBIfam" id="NF009982">
    <property type="entry name" value="PRK13448.1"/>
    <property type="match status" value="1"/>
</dbReference>
<dbReference type="PANTHER" id="PTHR13822">
    <property type="entry name" value="ATP SYNTHASE DELTA/EPSILON CHAIN"/>
    <property type="match status" value="1"/>
</dbReference>
<dbReference type="PANTHER" id="PTHR13822:SF10">
    <property type="entry name" value="ATP SYNTHASE EPSILON CHAIN, CHLOROPLASTIC"/>
    <property type="match status" value="1"/>
</dbReference>
<dbReference type="Pfam" id="PF02823">
    <property type="entry name" value="ATP-synt_DE_N"/>
    <property type="match status" value="1"/>
</dbReference>
<dbReference type="SUPFAM" id="SSF51344">
    <property type="entry name" value="Epsilon subunit of F1F0-ATP synthase N-terminal domain"/>
    <property type="match status" value="1"/>
</dbReference>